<name>HN_NDVB</name>
<gene>
    <name type="primary">HN</name>
</gene>
<protein>
    <recommendedName>
        <fullName>Hemagglutinin-neuraminidase</fullName>
        <ecNumber evidence="3">3.2.1.18</ecNumber>
    </recommendedName>
</protein>
<proteinExistence type="evidence at protein level"/>
<evidence type="ECO:0000250" key="1">
    <source>
        <dbReference type="UniProtKB" id="P04853"/>
    </source>
</evidence>
<evidence type="ECO:0000250" key="2">
    <source>
        <dbReference type="UniProtKB" id="Q91UL0"/>
    </source>
</evidence>
<evidence type="ECO:0000250" key="3">
    <source>
        <dbReference type="UniProtKB" id="Q9WAF5"/>
    </source>
</evidence>
<evidence type="ECO:0000255" key="4"/>
<evidence type="ECO:0000305" key="5"/>
<evidence type="ECO:0007829" key="6">
    <source>
        <dbReference type="PDB" id="1USR"/>
    </source>
</evidence>
<evidence type="ECO:0007829" key="7">
    <source>
        <dbReference type="PDB" id="1USX"/>
    </source>
</evidence>
<reference key="1">
    <citation type="journal article" date="1986" name="J. Gen. Virol.">
        <title>Nucleotide sequence analysis of the haemagglutinin-neuraminidase gene of Newcastle disease virus.</title>
        <authorList>
            <person name="Millar N.S."/>
            <person name="Chambers P."/>
            <person name="Emmerson P.T."/>
        </authorList>
    </citation>
    <scope>NUCLEOTIDE SEQUENCE [GENOMIC RNA]</scope>
</reference>
<reference key="2">
    <citation type="journal article" date="1989" name="Virology">
        <title>Newcastle disease virus evolution. I. Multiple lineages defined by sequence variability of the hemagglutinin-neuraminidase gene.</title>
        <authorList>
            <person name="Sakaguchi T."/>
            <person name="Toyoda T."/>
            <person name="Gotoh B."/>
            <person name="Inocencio N.M."/>
            <person name="Kuma K."/>
            <person name="Miyata T."/>
            <person name="Nagai Y."/>
        </authorList>
    </citation>
    <scope>NUCLEOTIDE SEQUENCE [GENOMIC RNA]</scope>
</reference>
<keyword id="KW-0002">3D-structure</keyword>
<keyword id="KW-1015">Disulfide bond</keyword>
<keyword id="KW-0325">Glycoprotein</keyword>
<keyword id="KW-0348">Hemagglutinin</keyword>
<keyword id="KW-1032">Host cell membrane</keyword>
<keyword id="KW-1043">Host membrane</keyword>
<keyword id="KW-0945">Host-virus interaction</keyword>
<keyword id="KW-0378">Hydrolase</keyword>
<keyword id="KW-0472">Membrane</keyword>
<keyword id="KW-0735">Signal-anchor</keyword>
<keyword id="KW-0812">Transmembrane</keyword>
<keyword id="KW-1133">Transmembrane helix</keyword>
<keyword id="KW-1161">Viral attachment to host cell</keyword>
<keyword id="KW-0261">Viral envelope protein</keyword>
<keyword id="KW-0946">Virion</keyword>
<keyword id="KW-1160">Virus entry into host cell</keyword>
<dbReference type="EC" id="3.2.1.18" evidence="3"/>
<dbReference type="EMBL" id="X04355">
    <property type="protein sequence ID" value="CAA27880.1"/>
    <property type="molecule type" value="Genomic_RNA"/>
</dbReference>
<dbReference type="EMBL" id="M24710">
    <property type="protein sequence ID" value="AAA46660.1"/>
    <property type="molecule type" value="Genomic_RNA"/>
</dbReference>
<dbReference type="PIR" id="F46328">
    <property type="entry name" value="F46328"/>
</dbReference>
<dbReference type="PDB" id="1USR">
    <property type="method" value="X-ray"/>
    <property type="resolution" value="2.00 A"/>
    <property type="chains" value="A/B=124-577"/>
</dbReference>
<dbReference type="PDB" id="1USX">
    <property type="method" value="X-ray"/>
    <property type="resolution" value="2.70 A"/>
    <property type="chains" value="A/B/C=124-577"/>
</dbReference>
<dbReference type="PDBsum" id="1USR"/>
<dbReference type="PDBsum" id="1USX"/>
<dbReference type="SMR" id="P32884"/>
<dbReference type="DrugBank" id="DB03991">
    <property type="generic name" value="2-deoxy-2,3-dehydro-N-acetylneuraminic acid"/>
</dbReference>
<dbReference type="DrugBank" id="DB04508">
    <property type="generic name" value="Methyl(6s)-1-Thio-L-Manno-Hexodialdo-6,2-Pyranoside"/>
</dbReference>
<dbReference type="DrugBank" id="DB03740">
    <property type="generic name" value="N-acetyl-alpha-D-glucosamine"/>
</dbReference>
<dbReference type="DrugBank" id="DB03721">
    <property type="generic name" value="N-acetyl-alpha-neuraminic acid"/>
</dbReference>
<dbReference type="CAZy" id="GH83">
    <property type="family name" value="Glycoside Hydrolase Family 83"/>
</dbReference>
<dbReference type="GlyCosmos" id="P32884">
    <property type="glycosylation" value="5 sites, No reported glycans"/>
</dbReference>
<dbReference type="EvolutionaryTrace" id="P32884"/>
<dbReference type="GO" id="GO:0020002">
    <property type="term" value="C:host cell plasma membrane"/>
    <property type="evidence" value="ECO:0007669"/>
    <property type="project" value="UniProtKB-SubCell"/>
</dbReference>
<dbReference type="GO" id="GO:0016020">
    <property type="term" value="C:membrane"/>
    <property type="evidence" value="ECO:0007669"/>
    <property type="project" value="UniProtKB-KW"/>
</dbReference>
<dbReference type="GO" id="GO:0019031">
    <property type="term" value="C:viral envelope"/>
    <property type="evidence" value="ECO:0007669"/>
    <property type="project" value="UniProtKB-KW"/>
</dbReference>
<dbReference type="GO" id="GO:0055036">
    <property type="term" value="C:virion membrane"/>
    <property type="evidence" value="ECO:0007669"/>
    <property type="project" value="UniProtKB-SubCell"/>
</dbReference>
<dbReference type="GO" id="GO:0004308">
    <property type="term" value="F:exo-alpha-sialidase activity"/>
    <property type="evidence" value="ECO:0007669"/>
    <property type="project" value="UniProtKB-EC"/>
</dbReference>
<dbReference type="GO" id="GO:0046789">
    <property type="term" value="F:host cell surface receptor binding"/>
    <property type="evidence" value="ECO:0007669"/>
    <property type="project" value="InterPro"/>
</dbReference>
<dbReference type="GO" id="GO:0046718">
    <property type="term" value="P:symbiont entry into host cell"/>
    <property type="evidence" value="ECO:0007669"/>
    <property type="project" value="UniProtKB-KW"/>
</dbReference>
<dbReference type="GO" id="GO:0019062">
    <property type="term" value="P:virion attachment to host cell"/>
    <property type="evidence" value="ECO:0007669"/>
    <property type="project" value="UniProtKB-KW"/>
</dbReference>
<dbReference type="CDD" id="cd15469">
    <property type="entry name" value="HN"/>
    <property type="match status" value="1"/>
</dbReference>
<dbReference type="FunFam" id="2.120.10.10:FF:000004">
    <property type="entry name" value="Hemagglutinin-neuraminidase"/>
    <property type="match status" value="1"/>
</dbReference>
<dbReference type="Gene3D" id="2.120.10.10">
    <property type="match status" value="1"/>
</dbReference>
<dbReference type="InterPro" id="IPR016285">
    <property type="entry name" value="Hemagglutn-neuramid"/>
</dbReference>
<dbReference type="InterPro" id="IPR000665">
    <property type="entry name" value="Hemagglutn/HN"/>
</dbReference>
<dbReference type="InterPro" id="IPR036278">
    <property type="entry name" value="Sialidase_sf"/>
</dbReference>
<dbReference type="Pfam" id="PF00423">
    <property type="entry name" value="HN"/>
    <property type="match status" value="1"/>
</dbReference>
<dbReference type="PIRSF" id="PIRSF001072">
    <property type="entry name" value="Hemagglut-neuramid_paramyxoV"/>
    <property type="match status" value="1"/>
</dbReference>
<dbReference type="SUPFAM" id="SSF50939">
    <property type="entry name" value="Sialidases"/>
    <property type="match status" value="1"/>
</dbReference>
<organismHost>
    <name type="scientific">Gallus gallus</name>
    <name type="common">Chicken</name>
    <dbReference type="NCBI Taxonomy" id="9031"/>
</organismHost>
<sequence>MDRAVSQVALENDEREAKNTWRLIFRIAILLLTVVTLATSVASLVYSMGASTPSDLVGIPTRISRAEEKITSALGSNQDVVDRIYKQVALESPLALLNTETTIMNAITSLSYQINGAANNSGWGAPIHDPDFIGGIGKELIVDDASDVTSFYPSAFQEHLNFIPAPTTGSGCTRIPSFDMSATHYCYTHNVILSGCRDHSHSHQYLALGVLRTTATGRIFFSTLRSISLDDTQNRKSCSVSATPLGCDMLCSKVTETEEEDYNSAVPTLMAHGRLGFDGQYHEKDLDVTTLFEDWVANYPGVGGGSFIDGRVWFSVYGGLKPNSPSDTVQEGKYVIYKRYNDTCPDEQDYQIRMAKSSYKPGRFGGKRIQQAILSIKVSTSLGEDPVLTVPPNTVTLMGAEGRILTVGTSHFLYQRGSSYFSPALLYPMTVSNKTATLHSPYTFNAFTRPGSIPCQASARCPNSCVTGVYTDPYPLIFYRNHTLRGVFGTMLDSEQARLNPTSAVFDSTSRSRITRVSSSSTKAAYTTSTCFKVVKTNKTYCLSIAEISNTLFGEFRIVPLLVEILKNDGVREARSG</sequence>
<comment type="function">
    <text evidence="2">Mediates the viral entry into the host cell together with fusion/F protein. Attaches the virus to sialic acid-containing cell receptors and thereby initiates infection. Binding of HN protein to the receptor induces a conformational change that allows the F protein to trigger virion/cell membranes fusion.</text>
</comment>
<comment type="function">
    <text evidence="2">Neuraminidase activity ensures the efficient spread of the virus by dissociating the mature virions from the neuraminic acid containing glycoproteins.</text>
</comment>
<comment type="catalytic activity">
    <reaction evidence="2">
        <text>Hydrolysis of alpha-(2-&gt;3)-, alpha-(2-&gt;6)-, alpha-(2-&gt;8)- glycosidic linkages of terminal sialic acid residues in oligosaccharides, glycoproteins, glycolipids, colominic acid and synthetic substrates.</text>
        <dbReference type="EC" id="3.2.1.18"/>
    </reaction>
</comment>
<comment type="subunit">
    <text evidence="1 2 3">Homotetramer; composed of disulfide-linked homodimers (By similarity). Interacts with F protein trimer (By similarity). Interacts with host CG-1B; this interaction inhibits viral adsorption and replication rather than internalization (By similarity).</text>
</comment>
<comment type="subcellular location">
    <subcellularLocation>
        <location evidence="2">Virion membrane</location>
        <topology evidence="2">Single-pass type II membrane protein</topology>
    </subcellularLocation>
    <subcellularLocation>
        <location evidence="2">Host cell membrane</location>
        <topology evidence="2">Single-pass type II membrane protein</topology>
    </subcellularLocation>
</comment>
<comment type="domain">
    <text evidence="3">The C-terminus (head domain) is involved in binding the cellular receptor.</text>
</comment>
<comment type="similarity">
    <text evidence="5">Belongs to the paramyxoviruses hemagglutinin-neuraminidase family.</text>
</comment>
<organism>
    <name type="scientific">Newcastle disease virus (strain Beaudette C/45)</name>
    <name type="common">NDV</name>
    <dbReference type="NCBI Taxonomy" id="11178"/>
    <lineage>
        <taxon>Viruses</taxon>
        <taxon>Riboviria</taxon>
        <taxon>Orthornavirae</taxon>
        <taxon>Negarnaviricota</taxon>
        <taxon>Haploviricotina</taxon>
        <taxon>Monjiviricetes</taxon>
        <taxon>Mononegavirales</taxon>
        <taxon>Paramyxoviridae</taxon>
        <taxon>Avulavirinae</taxon>
        <taxon>Orthoavulavirus</taxon>
        <taxon>Orthoavulavirus javaense</taxon>
        <taxon>Avian paramyxovirus 1</taxon>
    </lineage>
</organism>
<accession>P32884</accession>
<accession>P06158</accession>
<feature type="chain" id="PRO_0000142607" description="Hemagglutinin-neuraminidase">
    <location>
        <begin position="1"/>
        <end position="577"/>
    </location>
</feature>
<feature type="topological domain" description="Intravirion" evidence="4">
    <location>
        <begin position="1"/>
        <end position="26"/>
    </location>
</feature>
<feature type="transmembrane region" description="Helical" evidence="4">
    <location>
        <begin position="27"/>
        <end position="48"/>
    </location>
</feature>
<feature type="topological domain" description="Virion surface" evidence="4">
    <location>
        <begin position="49"/>
        <end position="577"/>
    </location>
</feature>
<feature type="region of interest" description="Important for interaction with fusion/F protein" evidence="2">
    <location>
        <begin position="124"/>
        <end position="152"/>
    </location>
</feature>
<feature type="region of interest" description="Involved in neuraminidase activity" evidence="2">
    <location>
        <begin position="234"/>
        <end position="239"/>
    </location>
</feature>
<feature type="modified residue" description="Blocked amino end (Met); by host">
    <location>
        <position position="1"/>
    </location>
</feature>
<feature type="glycosylation site" description="N-linked (GlcNAc...) asparagine; by host" evidence="4">
    <location>
        <position position="119"/>
    </location>
</feature>
<feature type="glycosylation site" description="N-linked (GlcNAc...) asparagine; by host" evidence="2">
    <location>
        <position position="341"/>
    </location>
</feature>
<feature type="glycosylation site" description="N-linked (GlcNAc...) asparagine; by host" evidence="2">
    <location>
        <position position="433"/>
    </location>
</feature>
<feature type="glycosylation site" description="N-linked (GlcNAc...) asparagine; by host" evidence="2">
    <location>
        <position position="481"/>
    </location>
</feature>
<feature type="glycosylation site" description="N-linked (GlcNAc...) asparagine; by host" evidence="4">
    <location>
        <position position="538"/>
    </location>
</feature>
<feature type="disulfide bond" evidence="3">
    <location>
        <begin position="172"/>
        <end position="196"/>
    </location>
</feature>
<feature type="disulfide bond" evidence="3">
    <location>
        <begin position="186"/>
        <end position="247"/>
    </location>
</feature>
<feature type="disulfide bond" evidence="3">
    <location>
        <begin position="238"/>
        <end position="251"/>
    </location>
</feature>
<feature type="disulfide bond" evidence="3">
    <location>
        <begin position="344"/>
        <end position="461"/>
    </location>
</feature>
<feature type="disulfide bond" evidence="3">
    <location>
        <begin position="455"/>
        <end position="465"/>
    </location>
</feature>
<feature type="disulfide bond" evidence="3">
    <location>
        <begin position="531"/>
        <end position="542"/>
    </location>
</feature>
<feature type="helix" evidence="6">
    <location>
        <begin position="130"/>
        <end position="132"/>
    </location>
</feature>
<feature type="strand" evidence="6">
    <location>
        <begin position="136"/>
        <end position="138"/>
    </location>
</feature>
<feature type="strand" evidence="6">
    <location>
        <begin position="144"/>
        <end position="146"/>
    </location>
</feature>
<feature type="helix" evidence="6">
    <location>
        <begin position="148"/>
        <end position="150"/>
    </location>
</feature>
<feature type="strand" evidence="6">
    <location>
        <begin position="151"/>
        <end position="153"/>
    </location>
</feature>
<feature type="strand" evidence="6">
    <location>
        <begin position="167"/>
        <end position="170"/>
    </location>
</feature>
<feature type="strand" evidence="6">
    <location>
        <begin position="172"/>
        <end position="180"/>
    </location>
</feature>
<feature type="strand" evidence="6">
    <location>
        <begin position="185"/>
        <end position="194"/>
    </location>
</feature>
<feature type="strand" evidence="6">
    <location>
        <begin position="203"/>
        <end position="213"/>
    </location>
</feature>
<feature type="strand" evidence="6">
    <location>
        <begin position="219"/>
        <end position="229"/>
    </location>
</feature>
<feature type="strand" evidence="7">
    <location>
        <begin position="231"/>
        <end position="233"/>
    </location>
</feature>
<feature type="strand" evidence="6">
    <location>
        <begin position="235"/>
        <end position="243"/>
    </location>
</feature>
<feature type="strand" evidence="6">
    <location>
        <begin position="246"/>
        <end position="253"/>
    </location>
</feature>
<feature type="helix" evidence="6">
    <location>
        <begin position="258"/>
        <end position="263"/>
    </location>
</feature>
<feature type="strand" evidence="6">
    <location>
        <begin position="264"/>
        <end position="266"/>
    </location>
</feature>
<feature type="strand" evidence="6">
    <location>
        <begin position="269"/>
        <end position="275"/>
    </location>
</feature>
<feature type="strand" evidence="6">
    <location>
        <begin position="281"/>
        <end position="285"/>
    </location>
</feature>
<feature type="helix" evidence="6">
    <location>
        <begin position="288"/>
        <end position="291"/>
    </location>
</feature>
<feature type="turn" evidence="6">
    <location>
        <begin position="292"/>
        <end position="294"/>
    </location>
</feature>
<feature type="strand" evidence="6">
    <location>
        <begin position="295"/>
        <end position="300"/>
    </location>
</feature>
<feature type="strand" evidence="6">
    <location>
        <begin position="306"/>
        <end position="308"/>
    </location>
</feature>
<feature type="strand" evidence="6">
    <location>
        <begin position="311"/>
        <end position="320"/>
    </location>
</feature>
<feature type="helix" evidence="6">
    <location>
        <begin position="325"/>
        <end position="330"/>
    </location>
</feature>
<feature type="helix" evidence="6">
    <location>
        <begin position="348"/>
        <end position="358"/>
    </location>
</feature>
<feature type="helix" evidence="6">
    <location>
        <begin position="362"/>
        <end position="364"/>
    </location>
</feature>
<feature type="strand" evidence="6">
    <location>
        <begin position="368"/>
        <end position="377"/>
    </location>
</feature>
<feature type="strand" evidence="6">
    <location>
        <begin position="379"/>
        <end position="381"/>
    </location>
</feature>
<feature type="strand" evidence="6">
    <location>
        <begin position="387"/>
        <end position="389"/>
    </location>
</feature>
<feature type="turn" evidence="6">
    <location>
        <begin position="393"/>
        <end position="395"/>
    </location>
</feature>
<feature type="strand" evidence="6">
    <location>
        <begin position="402"/>
        <end position="407"/>
    </location>
</feature>
<feature type="strand" evidence="6">
    <location>
        <begin position="410"/>
        <end position="415"/>
    </location>
</feature>
<feature type="strand" evidence="6">
    <location>
        <begin position="423"/>
        <end position="432"/>
    </location>
</feature>
<feature type="strand" evidence="6">
    <location>
        <begin position="435"/>
        <end position="438"/>
    </location>
</feature>
<feature type="strand" evidence="6">
    <location>
        <begin position="442"/>
        <end position="444"/>
    </location>
</feature>
<feature type="strand" evidence="6">
    <location>
        <begin position="473"/>
        <end position="478"/>
    </location>
</feature>
<feature type="strand" evidence="6">
    <location>
        <begin position="484"/>
        <end position="492"/>
    </location>
</feature>
<feature type="strand" evidence="6">
    <location>
        <begin position="495"/>
        <end position="499"/>
    </location>
</feature>
<feature type="strand" evidence="6">
    <location>
        <begin position="501"/>
        <end position="506"/>
    </location>
</feature>
<feature type="strand" evidence="6">
    <location>
        <begin position="515"/>
        <end position="517"/>
    </location>
</feature>
<feature type="strand" evidence="6">
    <location>
        <begin position="523"/>
        <end position="534"/>
    </location>
</feature>
<feature type="turn" evidence="6">
    <location>
        <begin position="535"/>
        <end position="538"/>
    </location>
</feature>
<feature type="strand" evidence="6">
    <location>
        <begin position="539"/>
        <end position="549"/>
    </location>
</feature>
<feature type="strand" evidence="6">
    <location>
        <begin position="551"/>
        <end position="553"/>
    </location>
</feature>
<feature type="strand" evidence="6">
    <location>
        <begin position="555"/>
        <end position="568"/>
    </location>
</feature>